<gene>
    <name evidence="1" type="primary">nfi</name>
    <name type="ordered locus">xcc-b100_1451</name>
</gene>
<dbReference type="EC" id="3.1.21.7" evidence="1"/>
<dbReference type="EMBL" id="AM920689">
    <property type="protein sequence ID" value="CAP50801.1"/>
    <property type="molecule type" value="Genomic_DNA"/>
</dbReference>
<dbReference type="SMR" id="B0RQR6"/>
<dbReference type="KEGG" id="xca:xcc-b100_1451"/>
<dbReference type="HOGENOM" id="CLU_047631_1_0_6"/>
<dbReference type="Proteomes" id="UP000001188">
    <property type="component" value="Chromosome"/>
</dbReference>
<dbReference type="GO" id="GO:0005737">
    <property type="term" value="C:cytoplasm"/>
    <property type="evidence" value="ECO:0007669"/>
    <property type="project" value="UniProtKB-SubCell"/>
</dbReference>
<dbReference type="GO" id="GO:0043737">
    <property type="term" value="F:deoxyribonuclease V activity"/>
    <property type="evidence" value="ECO:0007669"/>
    <property type="project" value="UniProtKB-UniRule"/>
</dbReference>
<dbReference type="GO" id="GO:0000287">
    <property type="term" value="F:magnesium ion binding"/>
    <property type="evidence" value="ECO:0007669"/>
    <property type="project" value="UniProtKB-UniRule"/>
</dbReference>
<dbReference type="GO" id="GO:0016891">
    <property type="term" value="F:RNA endonuclease activity, producing 5'-phosphomonoesters"/>
    <property type="evidence" value="ECO:0007669"/>
    <property type="project" value="TreeGrafter"/>
</dbReference>
<dbReference type="GO" id="GO:0003727">
    <property type="term" value="F:single-stranded RNA binding"/>
    <property type="evidence" value="ECO:0007669"/>
    <property type="project" value="TreeGrafter"/>
</dbReference>
<dbReference type="GO" id="GO:0006281">
    <property type="term" value="P:DNA repair"/>
    <property type="evidence" value="ECO:0007669"/>
    <property type="project" value="UniProtKB-UniRule"/>
</dbReference>
<dbReference type="CDD" id="cd06559">
    <property type="entry name" value="Endonuclease_V"/>
    <property type="match status" value="1"/>
</dbReference>
<dbReference type="FunFam" id="3.30.2170.10:FF:000001">
    <property type="entry name" value="Endonuclease V"/>
    <property type="match status" value="1"/>
</dbReference>
<dbReference type="Gene3D" id="3.30.2170.10">
    <property type="entry name" value="archaeoglobus fulgidus dsm 4304 superfamily"/>
    <property type="match status" value="1"/>
</dbReference>
<dbReference type="HAMAP" id="MF_00801">
    <property type="entry name" value="Endonuclease_5"/>
    <property type="match status" value="1"/>
</dbReference>
<dbReference type="InterPro" id="IPR007581">
    <property type="entry name" value="Endonuclease-V"/>
</dbReference>
<dbReference type="NCBIfam" id="NF008629">
    <property type="entry name" value="PRK11617.1"/>
    <property type="match status" value="1"/>
</dbReference>
<dbReference type="PANTHER" id="PTHR28511">
    <property type="entry name" value="ENDONUCLEASE V"/>
    <property type="match status" value="1"/>
</dbReference>
<dbReference type="PANTHER" id="PTHR28511:SF1">
    <property type="entry name" value="ENDONUCLEASE V"/>
    <property type="match status" value="1"/>
</dbReference>
<dbReference type="Pfam" id="PF04493">
    <property type="entry name" value="Endonuclease_5"/>
    <property type="match status" value="1"/>
</dbReference>
<reference key="1">
    <citation type="journal article" date="2008" name="J. Biotechnol.">
        <title>The genome of Xanthomonas campestris pv. campestris B100 and its use for the reconstruction of metabolic pathways involved in xanthan biosynthesis.</title>
        <authorList>
            <person name="Vorhoelter F.-J."/>
            <person name="Schneiker S."/>
            <person name="Goesmann A."/>
            <person name="Krause L."/>
            <person name="Bekel T."/>
            <person name="Kaiser O."/>
            <person name="Linke B."/>
            <person name="Patschkowski T."/>
            <person name="Rueckert C."/>
            <person name="Schmid J."/>
            <person name="Sidhu V.K."/>
            <person name="Sieber V."/>
            <person name="Tauch A."/>
            <person name="Watt S.A."/>
            <person name="Weisshaar B."/>
            <person name="Becker A."/>
            <person name="Niehaus K."/>
            <person name="Puehler A."/>
        </authorList>
    </citation>
    <scope>NUCLEOTIDE SEQUENCE [LARGE SCALE GENOMIC DNA]</scope>
    <source>
        <strain>B100</strain>
    </source>
</reference>
<name>NFI_XANCB</name>
<protein>
    <recommendedName>
        <fullName evidence="1">Endonuclease V</fullName>
        <ecNumber evidence="1">3.1.21.7</ecNumber>
    </recommendedName>
    <alternativeName>
        <fullName evidence="1">Deoxyinosine 3'endonuclease</fullName>
    </alternativeName>
    <alternativeName>
        <fullName evidence="1">Deoxyribonuclease V</fullName>
        <shortName evidence="1">DNase V</shortName>
    </alternativeName>
</protein>
<evidence type="ECO:0000255" key="1">
    <source>
        <dbReference type="HAMAP-Rule" id="MF_00801"/>
    </source>
</evidence>
<accession>B0RQR6</accession>
<proteinExistence type="inferred from homology"/>
<organism>
    <name type="scientific">Xanthomonas campestris pv. campestris (strain B100)</name>
    <dbReference type="NCBI Taxonomy" id="509169"/>
    <lineage>
        <taxon>Bacteria</taxon>
        <taxon>Pseudomonadati</taxon>
        <taxon>Pseudomonadota</taxon>
        <taxon>Gammaproteobacteria</taxon>
        <taxon>Lysobacterales</taxon>
        <taxon>Lysobacteraceae</taxon>
        <taxon>Xanthomonas</taxon>
    </lineage>
</organism>
<feature type="chain" id="PRO_1000133893" description="Endonuclease V">
    <location>
        <begin position="1"/>
        <end position="236"/>
    </location>
</feature>
<feature type="binding site" evidence="1">
    <location>
        <position position="47"/>
    </location>
    <ligand>
        <name>Mg(2+)</name>
        <dbReference type="ChEBI" id="CHEBI:18420"/>
    </ligand>
</feature>
<feature type="binding site" evidence="1">
    <location>
        <position position="115"/>
    </location>
    <ligand>
        <name>Mg(2+)</name>
        <dbReference type="ChEBI" id="CHEBI:18420"/>
    </ligand>
</feature>
<feature type="site" description="Interaction with target DNA" evidence="1">
    <location>
        <position position="85"/>
    </location>
</feature>
<keyword id="KW-0963">Cytoplasm</keyword>
<keyword id="KW-0227">DNA damage</keyword>
<keyword id="KW-0234">DNA repair</keyword>
<keyword id="KW-0255">Endonuclease</keyword>
<keyword id="KW-0378">Hydrolase</keyword>
<keyword id="KW-0460">Magnesium</keyword>
<keyword id="KW-0479">Metal-binding</keyword>
<keyword id="KW-0540">Nuclease</keyword>
<comment type="function">
    <text evidence="1">DNA repair enzyme involved in the repair of deaminated bases. Selectively cleaves double-stranded DNA at the second phosphodiester bond 3' to a deoxyinosine leaving behind the intact lesion on the nicked DNA.</text>
</comment>
<comment type="catalytic activity">
    <reaction evidence="1">
        <text>Endonucleolytic cleavage at apurinic or apyrimidinic sites to products with a 5'-phosphate.</text>
        <dbReference type="EC" id="3.1.21.7"/>
    </reaction>
</comment>
<comment type="cofactor">
    <cofactor evidence="1">
        <name>Mg(2+)</name>
        <dbReference type="ChEBI" id="CHEBI:18420"/>
    </cofactor>
</comment>
<comment type="subcellular location">
    <subcellularLocation>
        <location evidence="1">Cytoplasm</location>
    </subcellularLocation>
</comment>
<comment type="similarity">
    <text evidence="1">Belongs to the endonuclease V family.</text>
</comment>
<sequence>MQTSIDPVFAGWDGSVAQARQLQQQLAQRVALRDEVSAAPALLAGFDVGFEDEGQTTRAAAVLLDAQTLLPLETHVARVPTSMPYVPGLLSFRELPALLRALALLSRTPDLVFIDGQGIAHPRRFGIAAHFGVVTGLPSIGVAKQRLAGTFIEPGGERGDHSPILLAGAQIGWALRSKPRCNPLIVSPGHRVSMQGALDWTLRTLRAYRLPEPTRLADRLASRRGEIELQTQPTLL</sequence>